<evidence type="ECO:0000250" key="1">
    <source>
        <dbReference type="UniProtKB" id="P13676"/>
    </source>
</evidence>
<evidence type="ECO:0000250" key="2">
    <source>
        <dbReference type="UniProtKB" id="P19205"/>
    </source>
</evidence>
<evidence type="ECO:0000250" key="3">
    <source>
        <dbReference type="UniProtKB" id="P80227"/>
    </source>
</evidence>
<evidence type="ECO:0000255" key="4">
    <source>
        <dbReference type="PROSITE-ProRule" id="PRU10084"/>
    </source>
</evidence>
<evidence type="ECO:0000269" key="5">
    <source>
    </source>
</evidence>
<evidence type="ECO:0000269" key="6">
    <source>
    </source>
</evidence>
<evidence type="ECO:0000269" key="7">
    <source>
    </source>
</evidence>
<evidence type="ECO:0000269" key="8">
    <source>
    </source>
</evidence>
<evidence type="ECO:0000305" key="9"/>
<evidence type="ECO:0007744" key="10">
    <source>
    </source>
</evidence>
<evidence type="ECO:0007744" key="11">
    <source>
    </source>
</evidence>
<evidence type="ECO:0007744" key="12">
    <source>
    </source>
</evidence>
<evidence type="ECO:0007744" key="13">
    <source>
    </source>
</evidence>
<evidence type="ECO:0007744" key="14">
    <source>
    </source>
</evidence>
<evidence type="ECO:0007744" key="15">
    <source>
    </source>
</evidence>
<gene>
    <name type="primary">APEH</name>
    <name type="synonym">D3F15S2</name>
    <name type="synonym">D3S48E</name>
    <name type="synonym">DNF15S2</name>
</gene>
<dbReference type="EC" id="3.4.19.1" evidence="6 7 8"/>
<dbReference type="EMBL" id="D38441">
    <property type="protein sequence ID" value="BAA07476.1"/>
    <property type="molecule type" value="mRNA"/>
</dbReference>
<dbReference type="EMBL" id="AF141383">
    <property type="protein sequence ID" value="AAF37321.1"/>
    <property type="molecule type" value="mRNA"/>
</dbReference>
<dbReference type="EMBL" id="BC000362">
    <property type="protein sequence ID" value="AAH00362.1"/>
    <property type="molecule type" value="mRNA"/>
</dbReference>
<dbReference type="EMBL" id="BC001499">
    <property type="protein sequence ID" value="AAH01499.1"/>
    <property type="molecule type" value="mRNA"/>
</dbReference>
<dbReference type="EMBL" id="BC001826">
    <property type="protein sequence ID" value="AAH01826.1"/>
    <property type="molecule type" value="mRNA"/>
</dbReference>
<dbReference type="EMBL" id="J03068">
    <property type="protein sequence ID" value="AAA35769.1"/>
    <property type="status" value="ALT_FRAME"/>
    <property type="molecule type" value="mRNA"/>
</dbReference>
<dbReference type="CCDS" id="CCDS2801.1"/>
<dbReference type="PIR" id="JC4655">
    <property type="entry name" value="JC4655"/>
</dbReference>
<dbReference type="RefSeq" id="NP_001631.3">
    <property type="nucleotide sequence ID" value="NM_001640.3"/>
</dbReference>
<dbReference type="RefSeq" id="XP_011531962.1">
    <property type="nucleotide sequence ID" value="XM_011533660.2"/>
</dbReference>
<dbReference type="SMR" id="P13798"/>
<dbReference type="BioGRID" id="106824">
    <property type="interactions" value="90"/>
</dbReference>
<dbReference type="FunCoup" id="P13798">
    <property type="interactions" value="1191"/>
</dbReference>
<dbReference type="IntAct" id="P13798">
    <property type="interactions" value="21"/>
</dbReference>
<dbReference type="STRING" id="9606.ENSP00000296456"/>
<dbReference type="ChEMBL" id="CHEMBL1741174"/>
<dbReference type="GuidetoPHARMACOLOGY" id="2328"/>
<dbReference type="ESTHER" id="human-APEH">
    <property type="family name" value="ACPH_Peptidase_S9"/>
</dbReference>
<dbReference type="MEROPS" id="S09.004"/>
<dbReference type="GlyGen" id="P13798">
    <property type="glycosylation" value="1 site, 1 O-linked glycan (1 site)"/>
</dbReference>
<dbReference type="iPTMnet" id="P13798"/>
<dbReference type="MetOSite" id="P13798"/>
<dbReference type="PhosphoSitePlus" id="P13798"/>
<dbReference type="SwissPalm" id="P13798"/>
<dbReference type="BioMuta" id="APEH"/>
<dbReference type="DMDM" id="38258902"/>
<dbReference type="CPTAC" id="CPTAC-21"/>
<dbReference type="CPTAC" id="CPTAC-22"/>
<dbReference type="jPOST" id="P13798"/>
<dbReference type="MassIVE" id="P13798"/>
<dbReference type="PaxDb" id="9606-ENSP00000296456"/>
<dbReference type="PeptideAtlas" id="P13798"/>
<dbReference type="ProteomicsDB" id="52988"/>
<dbReference type="Pumba" id="P13798"/>
<dbReference type="Antibodypedia" id="30567">
    <property type="antibodies" value="243 antibodies from 29 providers"/>
</dbReference>
<dbReference type="DNASU" id="327"/>
<dbReference type="Ensembl" id="ENST00000296456.10">
    <property type="protein sequence ID" value="ENSP00000296456.5"/>
    <property type="gene ID" value="ENSG00000164062.13"/>
</dbReference>
<dbReference type="GeneID" id="327"/>
<dbReference type="KEGG" id="hsa:327"/>
<dbReference type="MANE-Select" id="ENST00000296456.10">
    <property type="protein sequence ID" value="ENSP00000296456.5"/>
    <property type="RefSeq nucleotide sequence ID" value="NM_001640.4"/>
    <property type="RefSeq protein sequence ID" value="NP_001631.3"/>
</dbReference>
<dbReference type="UCSC" id="uc003cxf.4">
    <property type="organism name" value="human"/>
</dbReference>
<dbReference type="AGR" id="HGNC:586"/>
<dbReference type="CTD" id="327"/>
<dbReference type="DisGeNET" id="327"/>
<dbReference type="GeneCards" id="APEH"/>
<dbReference type="HGNC" id="HGNC:586">
    <property type="gene designation" value="APEH"/>
</dbReference>
<dbReference type="HPA" id="ENSG00000164062">
    <property type="expression patterns" value="Low tissue specificity"/>
</dbReference>
<dbReference type="MIM" id="102645">
    <property type="type" value="gene"/>
</dbReference>
<dbReference type="neXtProt" id="NX_P13798"/>
<dbReference type="OpenTargets" id="ENSG00000164062"/>
<dbReference type="PharmGKB" id="PA24878"/>
<dbReference type="VEuPathDB" id="HostDB:ENSG00000164062"/>
<dbReference type="eggNOG" id="KOG2100">
    <property type="taxonomic scope" value="Eukaryota"/>
</dbReference>
<dbReference type="GeneTree" id="ENSGT00390000013172"/>
<dbReference type="HOGENOM" id="CLU_014230_1_1_1"/>
<dbReference type="InParanoid" id="P13798"/>
<dbReference type="OrthoDB" id="416344at2759"/>
<dbReference type="PAN-GO" id="P13798">
    <property type="GO annotations" value="1 GO annotation based on evolutionary models"/>
</dbReference>
<dbReference type="PhylomeDB" id="P13798"/>
<dbReference type="TreeFam" id="TF312937"/>
<dbReference type="BioCyc" id="MetaCyc:HS08997-MONOMER"/>
<dbReference type="BRENDA" id="3.4.19.1">
    <property type="organism ID" value="2681"/>
</dbReference>
<dbReference type="PathwayCommons" id="P13798"/>
<dbReference type="Reactome" id="R-HSA-6798695">
    <property type="pathway name" value="Neutrophil degranulation"/>
</dbReference>
<dbReference type="Reactome" id="R-HSA-72764">
    <property type="pathway name" value="Eukaryotic Translation Termination"/>
</dbReference>
<dbReference type="SignaLink" id="P13798"/>
<dbReference type="BioGRID-ORCS" id="327">
    <property type="hits" value="10 hits in 1159 CRISPR screens"/>
</dbReference>
<dbReference type="ChiTaRS" id="APEH">
    <property type="organism name" value="human"/>
</dbReference>
<dbReference type="GeneWiki" id="APEH_(gene)"/>
<dbReference type="GenomeRNAi" id="327"/>
<dbReference type="Pharos" id="P13798">
    <property type="development level" value="Tchem"/>
</dbReference>
<dbReference type="PRO" id="PR:P13798"/>
<dbReference type="Proteomes" id="UP000005640">
    <property type="component" value="Chromosome 3"/>
</dbReference>
<dbReference type="RNAct" id="P13798">
    <property type="molecule type" value="protein"/>
</dbReference>
<dbReference type="Bgee" id="ENSG00000164062">
    <property type="expression patterns" value="Expressed in mucosa of transverse colon and 191 other cell types or tissues"/>
</dbReference>
<dbReference type="ExpressionAtlas" id="P13798">
    <property type="expression patterns" value="baseline and differential"/>
</dbReference>
<dbReference type="GO" id="GO:0005829">
    <property type="term" value="C:cytosol"/>
    <property type="evidence" value="ECO:0000314"/>
    <property type="project" value="HPA"/>
</dbReference>
<dbReference type="GO" id="GO:0070062">
    <property type="term" value="C:extracellular exosome"/>
    <property type="evidence" value="ECO:0007005"/>
    <property type="project" value="UniProtKB"/>
</dbReference>
<dbReference type="GO" id="GO:0005576">
    <property type="term" value="C:extracellular region"/>
    <property type="evidence" value="ECO:0000304"/>
    <property type="project" value="Reactome"/>
</dbReference>
<dbReference type="GO" id="GO:1904813">
    <property type="term" value="C:ficolin-1-rich granule lumen"/>
    <property type="evidence" value="ECO:0000304"/>
    <property type="project" value="Reactome"/>
</dbReference>
<dbReference type="GO" id="GO:0031965">
    <property type="term" value="C:nuclear membrane"/>
    <property type="evidence" value="ECO:0000314"/>
    <property type="project" value="HPA"/>
</dbReference>
<dbReference type="GO" id="GO:0042802">
    <property type="term" value="F:identical protein binding"/>
    <property type="evidence" value="ECO:0000353"/>
    <property type="project" value="IntAct"/>
</dbReference>
<dbReference type="GO" id="GO:0008242">
    <property type="term" value="F:omega peptidase activity"/>
    <property type="evidence" value="ECO:0000314"/>
    <property type="project" value="UniProtKB"/>
</dbReference>
<dbReference type="GO" id="GO:0003723">
    <property type="term" value="F:RNA binding"/>
    <property type="evidence" value="ECO:0007005"/>
    <property type="project" value="UniProtKB"/>
</dbReference>
<dbReference type="GO" id="GO:0004252">
    <property type="term" value="F:serine-type endopeptidase activity"/>
    <property type="evidence" value="ECO:0000314"/>
    <property type="project" value="UniProtKB"/>
</dbReference>
<dbReference type="GO" id="GO:0050435">
    <property type="term" value="P:amyloid-beta metabolic process"/>
    <property type="evidence" value="ECO:0000314"/>
    <property type="project" value="UniProtKB"/>
</dbReference>
<dbReference type="GO" id="GO:0006508">
    <property type="term" value="P:proteolysis"/>
    <property type="evidence" value="ECO:0000314"/>
    <property type="project" value="UniProtKB"/>
</dbReference>
<dbReference type="GO" id="GO:0006415">
    <property type="term" value="P:translational termination"/>
    <property type="evidence" value="ECO:0000304"/>
    <property type="project" value="Reactome"/>
</dbReference>
<dbReference type="FunFam" id="2.120.10.30:FF:000047">
    <property type="entry name" value="Acylamino-acid-releasing enzyme"/>
    <property type="match status" value="1"/>
</dbReference>
<dbReference type="FunFam" id="3.40.50.1820:FF:000043">
    <property type="entry name" value="acylamino-acid-releasing enzyme"/>
    <property type="match status" value="1"/>
</dbReference>
<dbReference type="Gene3D" id="3.40.50.1820">
    <property type="entry name" value="alpha/beta hydrolase"/>
    <property type="match status" value="1"/>
</dbReference>
<dbReference type="Gene3D" id="2.120.10.30">
    <property type="entry name" value="TolB, C-terminal domain"/>
    <property type="match status" value="1"/>
</dbReference>
<dbReference type="InterPro" id="IPR011042">
    <property type="entry name" value="6-blade_b-propeller_TolB-like"/>
</dbReference>
<dbReference type="InterPro" id="IPR045550">
    <property type="entry name" value="AARE_N"/>
</dbReference>
<dbReference type="InterPro" id="IPR029058">
    <property type="entry name" value="AB_hydrolase_fold"/>
</dbReference>
<dbReference type="InterPro" id="IPR002471">
    <property type="entry name" value="Pept_S9_AS"/>
</dbReference>
<dbReference type="InterPro" id="IPR001375">
    <property type="entry name" value="Peptidase_S9_cat"/>
</dbReference>
<dbReference type="PANTHER" id="PTHR42776:SF4">
    <property type="entry name" value="ACYLAMINO-ACID-RELEASING ENZYME"/>
    <property type="match status" value="1"/>
</dbReference>
<dbReference type="PANTHER" id="PTHR42776">
    <property type="entry name" value="SERINE PEPTIDASE S9 FAMILY MEMBER"/>
    <property type="match status" value="1"/>
</dbReference>
<dbReference type="Pfam" id="PF19283">
    <property type="entry name" value="APEH_N"/>
    <property type="match status" value="1"/>
</dbReference>
<dbReference type="Pfam" id="PF00326">
    <property type="entry name" value="Peptidase_S9"/>
    <property type="match status" value="1"/>
</dbReference>
<dbReference type="SUPFAM" id="SSF53474">
    <property type="entry name" value="alpha/beta-Hydrolases"/>
    <property type="match status" value="1"/>
</dbReference>
<dbReference type="SUPFAM" id="SSF50993">
    <property type="entry name" value="Peptidase/esterase 'gauge' domain"/>
    <property type="match status" value="1"/>
</dbReference>
<dbReference type="PROSITE" id="PS00708">
    <property type="entry name" value="PRO_ENDOPEP_SER"/>
    <property type="match status" value="1"/>
</dbReference>
<feature type="chain" id="PRO_0000122430" description="Acylamino-acid-releasing enzyme">
    <location>
        <begin position="1"/>
        <end position="732"/>
    </location>
</feature>
<feature type="active site" description="Charge relay system" evidence="4 7">
    <location>
        <position position="587"/>
    </location>
</feature>
<feature type="active site" description="Charge relay system" evidence="4">
    <location>
        <position position="675"/>
    </location>
</feature>
<feature type="active site" description="Charge relay system" evidence="4 7">
    <location>
        <position position="707"/>
    </location>
</feature>
<feature type="modified residue" description="N-acetylmethionine" evidence="5">
    <location>
        <position position="1"/>
    </location>
</feature>
<feature type="modified residue" description="Phosphoserine" evidence="11 14">
    <location>
        <position position="185"/>
    </location>
</feature>
<feature type="modified residue" description="Phosphoserine" evidence="10 11 12 13 14 15">
    <location>
        <position position="187"/>
    </location>
</feature>
<feature type="sequence variant" id="VAR_051580" description="In dbSNP:rs3816877.">
    <original>T</original>
    <variation>M</variation>
    <location>
        <position position="541"/>
    </location>
</feature>
<feature type="sequence conflict" description="In Ref. 1; BAA07476." evidence="9" ref="1">
    <original>T</original>
    <variation>S</variation>
    <location>
        <position position="101"/>
    </location>
</feature>
<feature type="sequence conflict" description="In Ref. 1; BAA07476." evidence="9" ref="1">
    <original>A</original>
    <variation>V</variation>
    <location>
        <position position="137"/>
    </location>
</feature>
<feature type="sequence conflict" description="In Ref. 1; BAA07476." evidence="9" ref="1">
    <original>K</original>
    <variation>R</variation>
    <location>
        <position position="168"/>
    </location>
</feature>
<feature type="sequence conflict" description="In Ref. 1; BAA07476." evidence="9" ref="1">
    <original>A</original>
    <variation>P</variation>
    <location>
        <position position="200"/>
    </location>
</feature>
<feature type="sequence conflict" description="In Ref. 2; AAF37321." evidence="9" ref="2">
    <original>A</original>
    <variation>V</variation>
    <location>
        <position position="403"/>
    </location>
</feature>
<keyword id="KW-0007">Acetylation</keyword>
<keyword id="KW-0963">Cytoplasm</keyword>
<keyword id="KW-0903">Direct protein sequencing</keyword>
<keyword id="KW-0378">Hydrolase</keyword>
<keyword id="KW-0597">Phosphoprotein</keyword>
<keyword id="KW-1267">Proteomics identification</keyword>
<keyword id="KW-1185">Reference proteome</keyword>
<accession>P13798</accession>
<accession>Q9BQ33</accession>
<accession>Q9P0Y2</accession>
<proteinExistence type="evidence at protein level"/>
<reference key="1">
    <citation type="journal article" date="1996" name="DNA Res.">
        <title>The nucleotide sequence of human acylamino acid-releasing enzyme.</title>
        <authorList>
            <person name="Mitta M."/>
            <person name="Ohnogi H."/>
            <person name="Mizutani S."/>
            <person name="Sakiyama F."/>
            <person name="Kato I."/>
            <person name="Tsunasawa S."/>
        </authorList>
    </citation>
    <scope>NUCLEOTIDE SEQUENCE [MRNA]</scope>
    <source>
        <tissue>Liver</tissue>
    </source>
</reference>
<reference key="2">
    <citation type="journal article" date="2000" name="Biochim. Biophys. Acta">
        <title>Identification of oxidized protein hydrolase of human erythrocytes as acylpeptide hydrolase.</title>
        <authorList>
            <person name="Fujino T."/>
            <person name="Watanabe K."/>
            <person name="Beppu M."/>
            <person name="Kikugawa K."/>
            <person name="Yasuda H."/>
        </authorList>
    </citation>
    <scope>NUCLEOTIDE SEQUENCE [MRNA]</scope>
    <scope>PARTIAL PROTEIN SEQUENCE</scope>
    <scope>FUNCTION</scope>
    <scope>CATALYTIC ACTIVITY</scope>
    <scope>SUBCELLULAR LOCATION</scope>
    <scope>TISSUE SPECIFICITY</scope>
</reference>
<reference key="3">
    <citation type="journal article" date="2004" name="Genome Res.">
        <title>The status, quality, and expansion of the NIH full-length cDNA project: the Mammalian Gene Collection (MGC).</title>
        <authorList>
            <consortium name="The MGC Project Team"/>
        </authorList>
    </citation>
    <scope>NUCLEOTIDE SEQUENCE [LARGE SCALE MRNA]</scope>
    <source>
        <tissue>Muscle</tissue>
    </source>
</reference>
<reference key="4">
    <citation type="journal article" date="1989" name="Genomics">
        <title>The DNF15S2 locus at 3p21 is transcribed in normal lung and small cell lung cancer.</title>
        <authorList>
            <person name="Naylor S.L."/>
            <person name="Marshall A."/>
            <person name="Hensel C."/>
            <person name="Martinez P.F."/>
            <person name="Holley B."/>
            <person name="Sakaguchi A.Y."/>
        </authorList>
    </citation>
    <scope>PRELIMINARY NUCLEOTIDE SEQUENCE OF 102-732</scope>
</reference>
<reference key="5">
    <citation type="journal article" date="1999" name="J. Protein Chem.">
        <title>Structural investigations on human erythrocyte acylpeptide hydrolase by mass spectrometric procedures.</title>
        <authorList>
            <person name="Scaloni A."/>
            <person name="Ingallinella P."/>
            <person name="Andolfo A."/>
            <person name="Jones W."/>
            <person name="Marino G."/>
            <person name="Manning J.M."/>
        </authorList>
    </citation>
    <scope>PARTIAL PROTEIN SEQUENCE</scope>
    <scope>MASS SPECTROMETRY</scope>
    <scope>ACETYLATION AT MET-1</scope>
</reference>
<reference key="6">
    <citation type="journal article" date="1991" name="Oncogene">
        <title>The gene from the short arm of chromosome 3, at D3F15S2, frequently deleted in renal cell carcinoma, encodes acylpeptide hydrolase.</title>
        <authorList>
            <person name="Erlandsson R."/>
            <person name="Boldog F."/>
            <person name="Persson B."/>
            <person name="Zabarovsky E.R."/>
            <person name="Allikmets R.L."/>
            <person name="Sumegi J."/>
            <person name="Klein G."/>
            <person name="Joernvall H."/>
        </authorList>
    </citation>
    <scope>FUNCTION</scope>
</reference>
<reference key="7">
    <citation type="journal article" date="1991" name="Proc. Natl. Acad. Sci. U.S.A.">
        <title>Genetic relationship between acylpeptide hydrolase and acylase, two hydrolytic enzymes with similar binding but different catalytic specificities.</title>
        <authorList>
            <person name="Jones W.M."/>
            <person name="Scaloni A."/>
            <person name="Bossa F."/>
            <person name="Popowicz A.M."/>
            <person name="Schneewind O."/>
            <person name="Manning J.M."/>
        </authorList>
    </citation>
    <scope>FUNCTION</scope>
    <scope>CATALYTIC ACTIVITY</scope>
</reference>
<reference key="8">
    <citation type="journal article" date="1992" name="J. Biol. Chem.">
        <title>Acylpeptide hydrolase: inhibitors and some active site residues of the human enzyme.</title>
        <authorList>
            <person name="Scaloni A."/>
            <person name="Jones W.M."/>
            <person name="Barra D."/>
            <person name="Pospischil M."/>
            <person name="Sassa S."/>
            <person name="Popowicz A."/>
            <person name="Manning L.R."/>
            <person name="Schneewind O."/>
            <person name="Manning J.M."/>
        </authorList>
    </citation>
    <scope>FUNCTION</scope>
    <scope>CATALYTIC ACTIVITY</scope>
    <scope>ACTIVE SITES SER-587 AND HIS-707</scope>
</reference>
<reference key="9">
    <citation type="journal article" date="2008" name="Proc. Natl. Acad. Sci. U.S.A.">
        <title>A quantitative atlas of mitotic phosphorylation.</title>
        <authorList>
            <person name="Dephoure N."/>
            <person name="Zhou C."/>
            <person name="Villen J."/>
            <person name="Beausoleil S.A."/>
            <person name="Bakalarski C.E."/>
            <person name="Elledge S.J."/>
            <person name="Gygi S.P."/>
        </authorList>
    </citation>
    <scope>PHOSPHORYLATION [LARGE SCALE ANALYSIS] AT SER-187</scope>
    <scope>IDENTIFICATION BY MASS SPECTROMETRY [LARGE SCALE ANALYSIS]</scope>
    <source>
        <tissue>Cervix carcinoma</tissue>
    </source>
</reference>
<reference key="10">
    <citation type="journal article" date="2009" name="Sci. Signal.">
        <title>Quantitative phosphoproteomic analysis of T cell receptor signaling reveals system-wide modulation of protein-protein interactions.</title>
        <authorList>
            <person name="Mayya V."/>
            <person name="Lundgren D.H."/>
            <person name="Hwang S.-I."/>
            <person name="Rezaul K."/>
            <person name="Wu L."/>
            <person name="Eng J.K."/>
            <person name="Rodionov V."/>
            <person name="Han D.K."/>
        </authorList>
    </citation>
    <scope>PHOSPHORYLATION [LARGE SCALE ANALYSIS] AT SER-185 AND SER-187</scope>
    <scope>IDENTIFICATION BY MASS SPECTROMETRY [LARGE SCALE ANALYSIS]</scope>
    <source>
        <tissue>Leukemic T-cell</tissue>
    </source>
</reference>
<reference key="11">
    <citation type="journal article" date="2010" name="Sci. Signal.">
        <title>Quantitative phosphoproteomics reveals widespread full phosphorylation site occupancy during mitosis.</title>
        <authorList>
            <person name="Olsen J.V."/>
            <person name="Vermeulen M."/>
            <person name="Santamaria A."/>
            <person name="Kumar C."/>
            <person name="Miller M.L."/>
            <person name="Jensen L.J."/>
            <person name="Gnad F."/>
            <person name="Cox J."/>
            <person name="Jensen T.S."/>
            <person name="Nigg E.A."/>
            <person name="Brunak S."/>
            <person name="Mann M."/>
        </authorList>
    </citation>
    <scope>PHOSPHORYLATION [LARGE SCALE ANALYSIS] AT SER-187</scope>
    <scope>IDENTIFICATION BY MASS SPECTROMETRY [LARGE SCALE ANALYSIS]</scope>
    <source>
        <tissue>Cervix carcinoma</tissue>
    </source>
</reference>
<reference key="12">
    <citation type="journal article" date="2011" name="BMC Syst. Biol.">
        <title>Initial characterization of the human central proteome.</title>
        <authorList>
            <person name="Burkard T.R."/>
            <person name="Planyavsky M."/>
            <person name="Kaupe I."/>
            <person name="Breitwieser F.P."/>
            <person name="Buerckstuemmer T."/>
            <person name="Bennett K.L."/>
            <person name="Superti-Furga G."/>
            <person name="Colinge J."/>
        </authorList>
    </citation>
    <scope>IDENTIFICATION BY MASS SPECTROMETRY [LARGE SCALE ANALYSIS]</scope>
</reference>
<reference key="13">
    <citation type="journal article" date="2011" name="Sci. Signal.">
        <title>System-wide temporal characterization of the proteome and phosphoproteome of human embryonic stem cell differentiation.</title>
        <authorList>
            <person name="Rigbolt K.T."/>
            <person name="Prokhorova T.A."/>
            <person name="Akimov V."/>
            <person name="Henningsen J."/>
            <person name="Johansen P.T."/>
            <person name="Kratchmarova I."/>
            <person name="Kassem M."/>
            <person name="Mann M."/>
            <person name="Olsen J.V."/>
            <person name="Blagoev B."/>
        </authorList>
    </citation>
    <scope>PHOSPHORYLATION [LARGE SCALE ANALYSIS] AT SER-187</scope>
    <scope>IDENTIFICATION BY MASS SPECTROMETRY [LARGE SCALE ANALYSIS]</scope>
</reference>
<reference key="14">
    <citation type="journal article" date="2013" name="J. Proteome Res.">
        <title>Toward a comprehensive characterization of a human cancer cell phosphoproteome.</title>
        <authorList>
            <person name="Zhou H."/>
            <person name="Di Palma S."/>
            <person name="Preisinger C."/>
            <person name="Peng M."/>
            <person name="Polat A.N."/>
            <person name="Heck A.J."/>
            <person name="Mohammed S."/>
        </authorList>
    </citation>
    <scope>PHOSPHORYLATION [LARGE SCALE ANALYSIS] AT SER-185 AND SER-187</scope>
    <scope>IDENTIFICATION BY MASS SPECTROMETRY [LARGE SCALE ANALYSIS]</scope>
    <source>
        <tissue>Cervix carcinoma</tissue>
        <tissue>Erythroleukemia</tissue>
    </source>
</reference>
<reference key="15">
    <citation type="journal article" date="2014" name="J. Proteomics">
        <title>An enzyme assisted RP-RPLC approach for in-depth analysis of human liver phosphoproteome.</title>
        <authorList>
            <person name="Bian Y."/>
            <person name="Song C."/>
            <person name="Cheng K."/>
            <person name="Dong M."/>
            <person name="Wang F."/>
            <person name="Huang J."/>
            <person name="Sun D."/>
            <person name="Wang L."/>
            <person name="Ye M."/>
            <person name="Zou H."/>
        </authorList>
    </citation>
    <scope>PHOSPHORYLATION [LARGE SCALE ANALYSIS] AT SER-187</scope>
    <scope>IDENTIFICATION BY MASS SPECTROMETRY [LARGE SCALE ANALYSIS]</scope>
    <source>
        <tissue>Liver</tissue>
    </source>
</reference>
<reference key="16">
    <citation type="journal article" date="1993" name="J. Mol. Biol.">
        <title>Crystallization and preliminary X-ray studies of human erythrocyte acylpeptide hydrolase.</title>
        <authorList>
            <person name="Feese M."/>
            <person name="Scaloni A."/>
            <person name="Jones W.M."/>
            <person name="Mannig J.M."/>
            <person name="Remington S.J."/>
        </authorList>
    </citation>
    <scope>X-RAY CRYSTALLOGRAPHY (2.2 ANGSTROMS)</scope>
</reference>
<name>ACPH_HUMAN</name>
<protein>
    <recommendedName>
        <fullName>Acylamino-acid-releasing enzyme</fullName>
        <shortName>AARE</shortName>
        <ecNumber evidence="6 7 8">3.4.19.1</ecNumber>
    </recommendedName>
    <alternativeName>
        <fullName>Acyl-peptide hydrolase</fullName>
        <shortName>APH</shortName>
    </alternativeName>
    <alternativeName>
        <fullName>Acylaminoacyl-peptidase</fullName>
    </alternativeName>
    <alternativeName>
        <fullName>Oxidized protein hydrolase</fullName>
        <shortName>OPH</shortName>
    </alternativeName>
</protein>
<sequence length="732" mass="81225">MERQVLLSEPEEAAALYRGLSRQPALSAACLGPEVTTQYGGQYRTVHTEWTQRDLERMENIRFCRQYLVFHDGDSVVFAGPAGNSVETRGELLSRESPSGTMKAVLRKAGGTGPGEEKQFLEVWEKNRKLKSFNLSALEKHGPVYEDDCFGCLSWSHSETHLLYVAEKKRPKAESFFQTKALDVSASDDEIARLKKPDQAIKGDQFVFYEDWGENMVSKSIPVLCVLDVESGNISVLEGVPENVSPGQAFWAPGDAGVVFVGWWHEPFRLGIRFCTNRRSALYYVDLIGGKCELLSDDSLAVSSPRLSPDQCRIVYLQYPSLIPHHQCSQLCLYDWYTKVTSVVVDVVPRQLGENFSGIYCSLLPLGCWSADSQRVVFDSAQRSRQDLFAVDTQVGTVTSLTAGGSGGSWKLLTIDQDLMVAQFSTPSLPPTLKVGFLPSAGKEQSVLWVSLEEAEPIPDIHWGIRVLQPPPEQENVQYAGLDFEAILLQPGSPPDKTQVPMVVMPHGGPHSSFVTAWMLFPAMLCKMGFAVLLVNYRGSTGFGQDSILSLPGNVGHQDVKDVQFAVEQVLQEEHFDASHVALMGGSHGGFISCHLIGQYPETYRACVARNPVINIASMLGSTDIPDWCVVEAGFPFSSDCLPDLSVWAEMLDKSPIRYIPQVKTPLLLMLGQEDRRVPFKQGMEYYRALKTRNVPVRLLLYPKSTHALSEVEVESDSFMNAVLWLRTHLGS</sequence>
<organism>
    <name type="scientific">Homo sapiens</name>
    <name type="common">Human</name>
    <dbReference type="NCBI Taxonomy" id="9606"/>
    <lineage>
        <taxon>Eukaryota</taxon>
        <taxon>Metazoa</taxon>
        <taxon>Chordata</taxon>
        <taxon>Craniata</taxon>
        <taxon>Vertebrata</taxon>
        <taxon>Euteleostomi</taxon>
        <taxon>Mammalia</taxon>
        <taxon>Eutheria</taxon>
        <taxon>Euarchontoglires</taxon>
        <taxon>Primates</taxon>
        <taxon>Haplorrhini</taxon>
        <taxon>Catarrhini</taxon>
        <taxon>Hominidae</taxon>
        <taxon>Homo</taxon>
    </lineage>
</organism>
<comment type="function">
    <text evidence="1 6 7 8">This enzyme catalyzes the hydrolysis of the N-terminal peptide bond of an N-acetylated peptide to generate an N-acetylated amino acid and a peptide with a free N-terminus (PubMed:10719179, PubMed:1740429, PubMed:2006156). It preferentially cleaves off Ac-Ala, Ac-Met and Ac-Ser (By similarity). Also, involved in the degradation of oxidized and glycated proteins (PubMed:10719179).</text>
</comment>
<comment type="catalytic activity">
    <reaction evidence="6 7 8">
        <text>Cleavage of an N-acetyl or N-formyl amino acid from the N-terminus of a polypeptide.</text>
        <dbReference type="EC" id="3.4.19.1"/>
    </reaction>
</comment>
<comment type="activity regulation">
    <text evidence="2">Homotetramerization is required for activity. Tetramerization results in the formation of a gated channel which is involved in substrate selection and substrate access to the catalytic sites.</text>
</comment>
<comment type="subunit">
    <text evidence="3">Homotetramer.</text>
</comment>
<comment type="interaction">
    <interactant intactId="EBI-723792">
        <id>P13798</id>
    </interactant>
    <interactant intactId="EBI-723792">
        <id>P13798</id>
        <label>APEH</label>
    </interactant>
    <organismsDiffer>false</organismsDiffer>
    <experiments>6</experiments>
</comment>
<comment type="interaction">
    <interactant intactId="EBI-723792">
        <id>P13798</id>
    </interactant>
    <interactant intactId="EBI-945994">
        <id>P53990</id>
        <label>IST1</label>
    </interactant>
    <organismsDiffer>false</organismsDiffer>
    <experiments>5</experiments>
</comment>
<comment type="interaction">
    <interactant intactId="EBI-723792">
        <id>P13798</id>
    </interactant>
    <interactant intactId="EBI-12188567">
        <id>P53990-3</id>
        <label>IST1</label>
    </interactant>
    <organismsDiffer>false</organismsDiffer>
    <experiments>3</experiments>
</comment>
<comment type="interaction">
    <interactant intactId="EBI-723792">
        <id>P13798</id>
    </interactant>
    <interactant intactId="EBI-740058">
        <id>O00214</id>
        <label>LGALS8</label>
    </interactant>
    <organismsDiffer>false</organismsDiffer>
    <experiments>4</experiments>
</comment>
<comment type="subcellular location">
    <subcellularLocation>
        <location evidence="6">Cytoplasm</location>
    </subcellularLocation>
</comment>
<comment type="tissue specificity">
    <text evidence="6">Expressed in erythrocytes (at protein level).</text>
</comment>
<comment type="mass spectrometry" mass="81269.9" error="8.7" method="Electrospray" evidence="5"/>
<comment type="similarity">
    <text evidence="9">Belongs to the peptidase S9C family.</text>
</comment>
<comment type="sequence caution" evidence="9">
    <conflict type="frameshift">
        <sequence resource="EMBL-CDS" id="AAA35769"/>
    </conflict>
</comment>